<comment type="function">
    <text evidence="1">Formation of pseudouridine at positions 38, 39 and 40 in the anticodon stem and loop of transfer RNAs.</text>
</comment>
<comment type="catalytic activity">
    <reaction evidence="1">
        <text>uridine(38/39/40) in tRNA = pseudouridine(38/39/40) in tRNA</text>
        <dbReference type="Rhea" id="RHEA:22376"/>
        <dbReference type="Rhea" id="RHEA-COMP:10085"/>
        <dbReference type="Rhea" id="RHEA-COMP:10087"/>
        <dbReference type="ChEBI" id="CHEBI:65314"/>
        <dbReference type="ChEBI" id="CHEBI:65315"/>
        <dbReference type="EC" id="5.4.99.12"/>
    </reaction>
</comment>
<comment type="subunit">
    <text evidence="1">Homodimer.</text>
</comment>
<comment type="similarity">
    <text evidence="1">Belongs to the tRNA pseudouridine synthase TruA family.</text>
</comment>
<organism>
    <name type="scientific">Staphylococcus aureus (strain Mu3 / ATCC 700698)</name>
    <dbReference type="NCBI Taxonomy" id="418127"/>
    <lineage>
        <taxon>Bacteria</taxon>
        <taxon>Bacillati</taxon>
        <taxon>Bacillota</taxon>
        <taxon>Bacilli</taxon>
        <taxon>Bacillales</taxon>
        <taxon>Staphylococcaceae</taxon>
        <taxon>Staphylococcus</taxon>
    </lineage>
</organism>
<dbReference type="EC" id="5.4.99.12" evidence="1"/>
<dbReference type="EMBL" id="AP009324">
    <property type="protein sequence ID" value="BAF79086.1"/>
    <property type="molecule type" value="Genomic_DNA"/>
</dbReference>
<dbReference type="RefSeq" id="WP_001221853.1">
    <property type="nucleotide sequence ID" value="NC_009782.1"/>
</dbReference>
<dbReference type="SMR" id="A7X5B5"/>
<dbReference type="KEGG" id="saw:SAHV_2203"/>
<dbReference type="HOGENOM" id="CLU_014673_0_1_9"/>
<dbReference type="GO" id="GO:0003723">
    <property type="term" value="F:RNA binding"/>
    <property type="evidence" value="ECO:0007669"/>
    <property type="project" value="InterPro"/>
</dbReference>
<dbReference type="GO" id="GO:0160147">
    <property type="term" value="F:tRNA pseudouridine(38-40) synthase activity"/>
    <property type="evidence" value="ECO:0007669"/>
    <property type="project" value="UniProtKB-EC"/>
</dbReference>
<dbReference type="GO" id="GO:0031119">
    <property type="term" value="P:tRNA pseudouridine synthesis"/>
    <property type="evidence" value="ECO:0007669"/>
    <property type="project" value="UniProtKB-UniRule"/>
</dbReference>
<dbReference type="CDD" id="cd02570">
    <property type="entry name" value="PseudoU_synth_EcTruA"/>
    <property type="match status" value="1"/>
</dbReference>
<dbReference type="FunFam" id="3.30.70.580:FF:000001">
    <property type="entry name" value="tRNA pseudouridine synthase A"/>
    <property type="match status" value="1"/>
</dbReference>
<dbReference type="Gene3D" id="3.30.70.660">
    <property type="entry name" value="Pseudouridine synthase I, catalytic domain, C-terminal subdomain"/>
    <property type="match status" value="1"/>
</dbReference>
<dbReference type="Gene3D" id="3.30.70.580">
    <property type="entry name" value="Pseudouridine synthase I, catalytic domain, N-terminal subdomain"/>
    <property type="match status" value="1"/>
</dbReference>
<dbReference type="HAMAP" id="MF_00171">
    <property type="entry name" value="TruA"/>
    <property type="match status" value="1"/>
</dbReference>
<dbReference type="InterPro" id="IPR020103">
    <property type="entry name" value="PsdUridine_synth_cat_dom_sf"/>
</dbReference>
<dbReference type="InterPro" id="IPR001406">
    <property type="entry name" value="PsdUridine_synth_TruA"/>
</dbReference>
<dbReference type="InterPro" id="IPR020097">
    <property type="entry name" value="PsdUridine_synth_TruA_a/b_dom"/>
</dbReference>
<dbReference type="InterPro" id="IPR020095">
    <property type="entry name" value="PsdUridine_synth_TruA_C"/>
</dbReference>
<dbReference type="InterPro" id="IPR020094">
    <property type="entry name" value="TruA/RsuA/RluB/E/F_N"/>
</dbReference>
<dbReference type="NCBIfam" id="TIGR00071">
    <property type="entry name" value="hisT_truA"/>
    <property type="match status" value="1"/>
</dbReference>
<dbReference type="PANTHER" id="PTHR11142">
    <property type="entry name" value="PSEUDOURIDYLATE SYNTHASE"/>
    <property type="match status" value="1"/>
</dbReference>
<dbReference type="PANTHER" id="PTHR11142:SF0">
    <property type="entry name" value="TRNA PSEUDOURIDINE SYNTHASE-LIKE 1"/>
    <property type="match status" value="1"/>
</dbReference>
<dbReference type="Pfam" id="PF01416">
    <property type="entry name" value="PseudoU_synth_1"/>
    <property type="match status" value="2"/>
</dbReference>
<dbReference type="PIRSF" id="PIRSF001430">
    <property type="entry name" value="tRNA_psdUrid_synth"/>
    <property type="match status" value="1"/>
</dbReference>
<dbReference type="SUPFAM" id="SSF55120">
    <property type="entry name" value="Pseudouridine synthase"/>
    <property type="match status" value="1"/>
</dbReference>
<feature type="chain" id="PRO_1000017184" description="tRNA pseudouridine synthase A">
    <location>
        <begin position="1"/>
        <end position="267"/>
    </location>
</feature>
<feature type="active site" description="Nucleophile" evidence="1">
    <location>
        <position position="51"/>
    </location>
</feature>
<feature type="binding site" evidence="1">
    <location>
        <position position="109"/>
    </location>
    <ligand>
        <name>substrate</name>
    </ligand>
</feature>
<evidence type="ECO:0000255" key="1">
    <source>
        <dbReference type="HAMAP-Rule" id="MF_00171"/>
    </source>
</evidence>
<reference key="1">
    <citation type="journal article" date="2008" name="Antimicrob. Agents Chemother.">
        <title>Mutated response regulator graR is responsible for phenotypic conversion of Staphylococcus aureus from heterogeneous vancomycin-intermediate resistance to vancomycin-intermediate resistance.</title>
        <authorList>
            <person name="Neoh H.-M."/>
            <person name="Cui L."/>
            <person name="Yuzawa H."/>
            <person name="Takeuchi F."/>
            <person name="Matsuo M."/>
            <person name="Hiramatsu K."/>
        </authorList>
    </citation>
    <scope>NUCLEOTIDE SEQUENCE [LARGE SCALE GENOMIC DNA]</scope>
    <source>
        <strain>Mu3 / ATCC 700698</strain>
    </source>
</reference>
<proteinExistence type="inferred from homology"/>
<protein>
    <recommendedName>
        <fullName evidence="1">tRNA pseudouridine synthase A</fullName>
        <ecNumber evidence="1">5.4.99.12</ecNumber>
    </recommendedName>
    <alternativeName>
        <fullName evidence="1">tRNA pseudouridine(38-40) synthase</fullName>
    </alternativeName>
    <alternativeName>
        <fullName evidence="1">tRNA pseudouridylate synthase I</fullName>
    </alternativeName>
    <alternativeName>
        <fullName evidence="1">tRNA-uridine isomerase I</fullName>
    </alternativeName>
</protein>
<accession>A7X5B5</accession>
<gene>
    <name evidence="1" type="primary">truA</name>
    <name type="ordered locus">SAHV_2203</name>
</gene>
<sequence length="267" mass="31352">MRILVEIAYQGNNFLGFQIQQNGRTVQQQFEKLLQRMHKRHVRIHPSSRTDRGVHAIQQYFHFDTELNIPMSQWQYAMNRTLPDDIYVNNVVTVDDDFHCRYDCVGKRYRYKVYQAQHRDPFQSGLKTFIPETLDLDKMNRAAQQFIGTHDFTGFCSQKTEVESKVRTLYQSEIVKTDDGFDYIVTGSGFLYNMVRVLVAFLIEVGKGRHEISDVPKLLESKNRKNVPFTAPAEGLYLEKIYLDENELLKDFGNDIKIHRKKSLQND</sequence>
<keyword id="KW-0413">Isomerase</keyword>
<keyword id="KW-0819">tRNA processing</keyword>
<name>TRUA_STAA1</name>